<sequence>MLRYYGATRNLPLVFSINKLMLRASSFTRPFHYSSYSLQNGDTPDKGSTNKNEIRTPNNAVWKENIELQWQHLKKKLNELYSRFNFHRDQLSFQVNKAKKSIQEANRKLSEQENEINDSRLNYNKDELTSAKIEGLPSEREQHRKKWSRKLEFYFDSLQETLFTATRALNDVTGYSGIQKLKSSISLMEKKLEATKKEHKLFKAQYANAIDERAQSQREVNELLQRQSAWSSSDLERFTQLYKNDALNARQEQELKNKVKEIESKEEQLNDDLYRAILTRYHEEQIWSDKIRRTSTWGTFILMGMNIFLFIVLQLLLEPWKRKRLVGSFEDKVKSALNEYAKEQNMKMDKLLPGKSSEVTDQGNTENSIVEEHIEQRGECKINTAEIDRPEVATAETTTTEMKSFRDIWERIKALFVTLKSIQYRKLDAPLVFDTLEFYLYSISLVSMTILVSGLI</sequence>
<evidence type="ECO:0000255" key="1"/>
<evidence type="ECO:0000269" key="2">
    <source>
    </source>
</evidence>
<evidence type="ECO:0000269" key="3">
    <source>
    </source>
</evidence>
<evidence type="ECO:0000269" key="4">
    <source>
    </source>
</evidence>
<evidence type="ECO:0000269" key="5">
    <source>
    </source>
</evidence>
<evidence type="ECO:0000305" key="6"/>
<gene>
    <name type="primary">SHE9</name>
    <name type="synonym">MDM33</name>
    <name type="ordered locus">YDR393W</name>
    <name type="ORF">D9509.13</name>
</gene>
<proteinExistence type="evidence at protein level"/>
<keyword id="KW-0175">Coiled coil</keyword>
<keyword id="KW-0472">Membrane</keyword>
<keyword id="KW-0496">Mitochondrion</keyword>
<keyword id="KW-0999">Mitochondrion inner membrane</keyword>
<keyword id="KW-1185">Reference proteome</keyword>
<keyword id="KW-0809">Transit peptide</keyword>
<keyword id="KW-0812">Transmembrane</keyword>
<keyword id="KW-1133">Transmembrane helix</keyword>
<reference key="1">
    <citation type="journal article" date="1997" name="Nature">
        <title>The nucleotide sequence of Saccharomyces cerevisiae chromosome IV.</title>
        <authorList>
            <person name="Jacq C."/>
            <person name="Alt-Moerbe J."/>
            <person name="Andre B."/>
            <person name="Arnold W."/>
            <person name="Bahr A."/>
            <person name="Ballesta J.P.G."/>
            <person name="Bargues M."/>
            <person name="Baron L."/>
            <person name="Becker A."/>
            <person name="Biteau N."/>
            <person name="Bloecker H."/>
            <person name="Blugeon C."/>
            <person name="Boskovic J."/>
            <person name="Brandt P."/>
            <person name="Brueckner M."/>
            <person name="Buitrago M.J."/>
            <person name="Coster F."/>
            <person name="Delaveau T."/>
            <person name="del Rey F."/>
            <person name="Dujon B."/>
            <person name="Eide L.G."/>
            <person name="Garcia-Cantalejo J.M."/>
            <person name="Goffeau A."/>
            <person name="Gomez-Peris A."/>
            <person name="Granotier C."/>
            <person name="Hanemann V."/>
            <person name="Hankeln T."/>
            <person name="Hoheisel J.D."/>
            <person name="Jaeger W."/>
            <person name="Jimenez A."/>
            <person name="Jonniaux J.-L."/>
            <person name="Kraemer C."/>
            <person name="Kuester H."/>
            <person name="Laamanen P."/>
            <person name="Legros Y."/>
            <person name="Louis E.J."/>
            <person name="Moeller-Rieker S."/>
            <person name="Monnet A."/>
            <person name="Moro M."/>
            <person name="Mueller-Auer S."/>
            <person name="Nussbaumer B."/>
            <person name="Paricio N."/>
            <person name="Paulin L."/>
            <person name="Perea J."/>
            <person name="Perez-Alonso M."/>
            <person name="Perez-Ortin J.E."/>
            <person name="Pohl T.M."/>
            <person name="Prydz H."/>
            <person name="Purnelle B."/>
            <person name="Rasmussen S.W."/>
            <person name="Remacha M.A."/>
            <person name="Revuelta J.L."/>
            <person name="Rieger M."/>
            <person name="Salom D."/>
            <person name="Saluz H.P."/>
            <person name="Saiz J.E."/>
            <person name="Saren A.-M."/>
            <person name="Schaefer M."/>
            <person name="Scharfe M."/>
            <person name="Schmidt E.R."/>
            <person name="Schneider C."/>
            <person name="Scholler P."/>
            <person name="Schwarz S."/>
            <person name="Soler-Mira A."/>
            <person name="Urrestarazu L.A."/>
            <person name="Verhasselt P."/>
            <person name="Vissers S."/>
            <person name="Voet M."/>
            <person name="Volckaert G."/>
            <person name="Wagner G."/>
            <person name="Wambutt R."/>
            <person name="Wedler E."/>
            <person name="Wedler H."/>
            <person name="Woelfl S."/>
            <person name="Harris D.E."/>
            <person name="Bowman S."/>
            <person name="Brown D."/>
            <person name="Churcher C.M."/>
            <person name="Connor R."/>
            <person name="Dedman K."/>
            <person name="Gentles S."/>
            <person name="Hamlin N."/>
            <person name="Hunt S."/>
            <person name="Jones L."/>
            <person name="McDonald S."/>
            <person name="Murphy L.D."/>
            <person name="Niblett D."/>
            <person name="Odell C."/>
            <person name="Oliver K."/>
            <person name="Rajandream M.A."/>
            <person name="Richards C."/>
            <person name="Shore L."/>
            <person name="Walsh S.V."/>
            <person name="Barrell B.G."/>
            <person name="Dietrich F.S."/>
            <person name="Mulligan J.T."/>
            <person name="Allen E."/>
            <person name="Araujo R."/>
            <person name="Aviles E."/>
            <person name="Berno A."/>
            <person name="Carpenter J."/>
            <person name="Chen E."/>
            <person name="Cherry J.M."/>
            <person name="Chung E."/>
            <person name="Duncan M."/>
            <person name="Hunicke-Smith S."/>
            <person name="Hyman R.W."/>
            <person name="Komp C."/>
            <person name="Lashkari D."/>
            <person name="Lew H."/>
            <person name="Lin D."/>
            <person name="Mosedale D."/>
            <person name="Nakahara K."/>
            <person name="Namath A."/>
            <person name="Oefner P."/>
            <person name="Oh C."/>
            <person name="Petel F.X."/>
            <person name="Roberts D."/>
            <person name="Schramm S."/>
            <person name="Schroeder M."/>
            <person name="Shogren T."/>
            <person name="Shroff N."/>
            <person name="Winant A."/>
            <person name="Yelton M.A."/>
            <person name="Botstein D."/>
            <person name="Davis R.W."/>
            <person name="Johnston M."/>
            <person name="Andrews S."/>
            <person name="Brinkman R."/>
            <person name="Cooper J."/>
            <person name="Ding H."/>
            <person name="Du Z."/>
            <person name="Favello A."/>
            <person name="Fulton L."/>
            <person name="Gattung S."/>
            <person name="Greco T."/>
            <person name="Hallsworth K."/>
            <person name="Hawkins J."/>
            <person name="Hillier L.W."/>
            <person name="Jier M."/>
            <person name="Johnson D."/>
            <person name="Johnston L."/>
            <person name="Kirsten J."/>
            <person name="Kucaba T."/>
            <person name="Langston Y."/>
            <person name="Latreille P."/>
            <person name="Le T."/>
            <person name="Mardis E."/>
            <person name="Menezes S."/>
            <person name="Miller N."/>
            <person name="Nhan M."/>
            <person name="Pauley A."/>
            <person name="Peluso D."/>
            <person name="Rifkin L."/>
            <person name="Riles L."/>
            <person name="Taich A."/>
            <person name="Trevaskis E."/>
            <person name="Vignati D."/>
            <person name="Wilcox L."/>
            <person name="Wohldman P."/>
            <person name="Vaudin M."/>
            <person name="Wilson R."/>
            <person name="Waterston R."/>
            <person name="Albermann K."/>
            <person name="Hani J."/>
            <person name="Heumann K."/>
            <person name="Kleine K."/>
            <person name="Mewes H.-W."/>
            <person name="Zollner A."/>
            <person name="Zaccaria P."/>
        </authorList>
    </citation>
    <scope>NUCLEOTIDE SEQUENCE [LARGE SCALE GENOMIC DNA]</scope>
    <source>
        <strain>ATCC 204508 / S288c</strain>
    </source>
</reference>
<reference key="2">
    <citation type="journal article" date="2014" name="G3 (Bethesda)">
        <title>The reference genome sequence of Saccharomyces cerevisiae: Then and now.</title>
        <authorList>
            <person name="Engel S.R."/>
            <person name="Dietrich F.S."/>
            <person name="Fisk D.G."/>
            <person name="Binkley G."/>
            <person name="Balakrishnan R."/>
            <person name="Costanzo M.C."/>
            <person name="Dwight S.S."/>
            <person name="Hitz B.C."/>
            <person name="Karra K."/>
            <person name="Nash R.S."/>
            <person name="Weng S."/>
            <person name="Wong E.D."/>
            <person name="Lloyd P."/>
            <person name="Skrzypek M.S."/>
            <person name="Miyasato S.R."/>
            <person name="Simison M."/>
            <person name="Cherry J.M."/>
        </authorList>
    </citation>
    <scope>GENOME REANNOTATION</scope>
    <source>
        <strain>ATCC 204508 / S288c</strain>
    </source>
</reference>
<reference key="3">
    <citation type="journal article" date="1995" name="Yeast">
        <title>An efficient method to isolate yeast genes causing overexpression-mediated growth arrest.</title>
        <authorList>
            <person name="Espinet C."/>
            <person name="de la Torre M.A."/>
            <person name="Aldea M."/>
            <person name="Herrero E."/>
        </authorList>
    </citation>
    <scope>FUNCTION</scope>
</reference>
<reference key="4">
    <citation type="journal article" date="2002" name="Mol. Biol. Cell">
        <title>Genetic basis of mitochondrial function and morphology in Saccharomyces cerevisiae.</title>
        <authorList>
            <person name="Dimmer K.S."/>
            <person name="Fritz S."/>
            <person name="Fuchs F."/>
            <person name="Messerschmitt M."/>
            <person name="Weinbach N."/>
            <person name="Neupert W."/>
            <person name="Westermann B."/>
        </authorList>
    </citation>
    <scope>FUNCTION</scope>
</reference>
<reference key="5">
    <citation type="journal article" date="2003" name="J. Cell Biol.">
        <title>The inner membrane protein Mdm33 controls mitochondrial morphology in yeast.</title>
        <authorList>
            <person name="Messerschmitt M."/>
            <person name="Jakobs S."/>
            <person name="Vogel F."/>
            <person name="Fritz S."/>
            <person name="Dimmer K.S."/>
            <person name="Neupert W."/>
            <person name="Westermann B."/>
        </authorList>
    </citation>
    <scope>FUNCTION</scope>
    <scope>SUBCELLULAR LOCATION</scope>
</reference>
<reference key="6">
    <citation type="journal article" date="2003" name="Nature">
        <title>Global analysis of protein expression in yeast.</title>
        <authorList>
            <person name="Ghaemmaghami S."/>
            <person name="Huh W.-K."/>
            <person name="Bower K."/>
            <person name="Howson R.W."/>
            <person name="Belle A."/>
            <person name="Dephoure N."/>
            <person name="O'Shea E.K."/>
            <person name="Weissman J.S."/>
        </authorList>
    </citation>
    <scope>LEVEL OF PROTEIN EXPRESSION [LARGE SCALE ANALYSIS]</scope>
</reference>
<feature type="transit peptide" description="Mitochondrion" evidence="1">
    <location>
        <begin position="1"/>
        <end position="30"/>
    </location>
</feature>
<feature type="chain" id="PRO_0000022344" description="Sensitive to high expression protein 9, mitochondrial">
    <location>
        <begin position="31"/>
        <end position="456"/>
    </location>
</feature>
<feature type="topological domain" description="Mitochondrial matrix" evidence="1">
    <location>
        <begin position="31"/>
        <end position="296"/>
    </location>
</feature>
<feature type="transmembrane region" description="Helical" evidence="1">
    <location>
        <begin position="297"/>
        <end position="317"/>
    </location>
</feature>
<feature type="topological domain" description="Mitochondrial intermembrane" evidence="1">
    <location>
        <begin position="318"/>
        <end position="435"/>
    </location>
</feature>
<feature type="transmembrane region" description="Helical" evidence="1">
    <location>
        <begin position="436"/>
        <end position="456"/>
    </location>
</feature>
<feature type="coiled-coil region" evidence="1">
    <location>
        <begin position="71"/>
        <end position="128"/>
    </location>
</feature>
<feature type="coiled-coil region" evidence="1">
    <location>
        <begin position="178"/>
        <end position="277"/>
    </location>
</feature>
<organism>
    <name type="scientific">Saccharomyces cerevisiae (strain ATCC 204508 / S288c)</name>
    <name type="common">Baker's yeast</name>
    <dbReference type="NCBI Taxonomy" id="559292"/>
    <lineage>
        <taxon>Eukaryota</taxon>
        <taxon>Fungi</taxon>
        <taxon>Dikarya</taxon>
        <taxon>Ascomycota</taxon>
        <taxon>Saccharomycotina</taxon>
        <taxon>Saccharomycetes</taxon>
        <taxon>Saccharomycetales</taxon>
        <taxon>Saccharomycetaceae</taxon>
        <taxon>Saccharomyces</taxon>
    </lineage>
</organism>
<protein>
    <recommendedName>
        <fullName>Sensitive to high expression protein 9, mitochondrial</fullName>
    </recommendedName>
    <alternativeName>
        <fullName>Mitochondrial distribution and morphology protein 33</fullName>
    </alternativeName>
</protein>
<accession>Q04172</accession>
<accession>D6VT27</accession>
<dbReference type="EMBL" id="U32274">
    <property type="protein sequence ID" value="AAB64835.1"/>
    <property type="molecule type" value="Genomic_DNA"/>
</dbReference>
<dbReference type="EMBL" id="BK006938">
    <property type="protein sequence ID" value="DAA12237.1"/>
    <property type="molecule type" value="Genomic_DNA"/>
</dbReference>
<dbReference type="PIR" id="S69677">
    <property type="entry name" value="S69677"/>
</dbReference>
<dbReference type="RefSeq" id="NP_010681.1">
    <property type="nucleotide sequence ID" value="NM_001180701.1"/>
</dbReference>
<dbReference type="SMR" id="Q04172"/>
<dbReference type="BioGRID" id="32455">
    <property type="interactions" value="294"/>
</dbReference>
<dbReference type="FunCoup" id="Q04172">
    <property type="interactions" value="73"/>
</dbReference>
<dbReference type="IntAct" id="Q04172">
    <property type="interactions" value="11"/>
</dbReference>
<dbReference type="STRING" id="4932.YDR393W"/>
<dbReference type="iPTMnet" id="Q04172"/>
<dbReference type="PaxDb" id="4932-YDR393W"/>
<dbReference type="PeptideAtlas" id="Q04172"/>
<dbReference type="EnsemblFungi" id="YDR393W_mRNA">
    <property type="protein sequence ID" value="YDR393W"/>
    <property type="gene ID" value="YDR393W"/>
</dbReference>
<dbReference type="GeneID" id="852002"/>
<dbReference type="KEGG" id="sce:YDR393W"/>
<dbReference type="AGR" id="SGD:S000002801"/>
<dbReference type="SGD" id="S000002801">
    <property type="gene designation" value="SHE9"/>
</dbReference>
<dbReference type="VEuPathDB" id="FungiDB:YDR393W"/>
<dbReference type="eggNOG" id="ENOG502QQ1E">
    <property type="taxonomic scope" value="Eukaryota"/>
</dbReference>
<dbReference type="HOGENOM" id="CLU_025632_5_1_1"/>
<dbReference type="InParanoid" id="Q04172"/>
<dbReference type="OMA" id="ENIELQW"/>
<dbReference type="OrthoDB" id="5595506at2759"/>
<dbReference type="BioCyc" id="YEAST:G3O-29941-MONOMER"/>
<dbReference type="BioGRID-ORCS" id="852002">
    <property type="hits" value="6 hits in 10 CRISPR screens"/>
</dbReference>
<dbReference type="PRO" id="PR:Q04172"/>
<dbReference type="Proteomes" id="UP000002311">
    <property type="component" value="Chromosome IV"/>
</dbReference>
<dbReference type="RNAct" id="Q04172">
    <property type="molecule type" value="protein"/>
</dbReference>
<dbReference type="GO" id="GO:0005743">
    <property type="term" value="C:mitochondrial inner membrane"/>
    <property type="evidence" value="ECO:0000314"/>
    <property type="project" value="SGD"/>
</dbReference>
<dbReference type="GO" id="GO:0005739">
    <property type="term" value="C:mitochondrion"/>
    <property type="evidence" value="ECO:0007005"/>
    <property type="project" value="SGD"/>
</dbReference>
<dbReference type="GO" id="GO:0007007">
    <property type="term" value="P:inner mitochondrial membrane organization"/>
    <property type="evidence" value="ECO:0000315"/>
    <property type="project" value="SGD"/>
</dbReference>
<dbReference type="GO" id="GO:0007005">
    <property type="term" value="P:mitochondrion organization"/>
    <property type="evidence" value="ECO:0000315"/>
    <property type="project" value="SGD"/>
</dbReference>
<dbReference type="InterPro" id="IPR008839">
    <property type="entry name" value="MDM33_fungi"/>
</dbReference>
<dbReference type="PANTHER" id="PTHR31961">
    <property type="entry name" value="SENSITIVE TO HIGH EXPRESSION PROTEIN 9, MITOCHONDRIAL"/>
    <property type="match status" value="1"/>
</dbReference>
<dbReference type="PANTHER" id="PTHR31961:SF3">
    <property type="entry name" value="SENSITIVE TO HIGH EXPRESSION PROTEIN 9, MITOCHONDRIAL"/>
    <property type="match status" value="1"/>
</dbReference>
<dbReference type="Pfam" id="PF05546">
    <property type="entry name" value="She9_MDM33"/>
    <property type="match status" value="1"/>
</dbReference>
<name>SHE9_YEAST</name>
<comment type="function">
    <text evidence="2 3 5">Required for the maintenance of the structure of the mitochondrial inner membrane. Involved in mitochondrial morphology. Causes growth arrest when highly overexpressed.</text>
</comment>
<comment type="subunit">
    <text>Homooligomer. Participates in a complex of about 300 kDa.</text>
</comment>
<comment type="subcellular location">
    <subcellularLocation>
        <location evidence="3">Mitochondrion inner membrane</location>
        <topology evidence="3">Multi-pass membrane protein</topology>
    </subcellularLocation>
</comment>
<comment type="miscellaneous">
    <text evidence="4">Present with 279 molecules/cell in log phase SD medium.</text>
</comment>
<comment type="similarity">
    <text evidence="6">Belongs to the SHE9 family.</text>
</comment>